<protein>
    <recommendedName>
        <fullName>Ras-like GTP-binding protein RHO1</fullName>
        <shortName evidence="7">EhRHO1</shortName>
        <ecNumber evidence="2">3.6.5.2</ecNumber>
    </recommendedName>
</protein>
<organism evidence="13">
    <name type="scientific">Entamoeba histolytica (strain ATCC 30459 / HM-1:IMSS / ABRM)</name>
    <dbReference type="NCBI Taxonomy" id="294381"/>
    <lineage>
        <taxon>Eukaryota</taxon>
        <taxon>Amoebozoa</taxon>
        <taxon>Evosea</taxon>
        <taxon>Archamoebae</taxon>
        <taxon>Mastigamoebida</taxon>
        <taxon>Entamoebidae</taxon>
        <taxon>Entamoeba</taxon>
    </lineage>
</organism>
<keyword id="KW-0002">3D-structure</keyword>
<keyword id="KW-1003">Cell membrane</keyword>
<keyword id="KW-0966">Cell projection</keyword>
<keyword id="KW-0963">Cytoplasm</keyword>
<keyword id="KW-0968">Cytoplasmic vesicle</keyword>
<keyword id="KW-0206">Cytoskeleton</keyword>
<keyword id="KW-0342">GTP-binding</keyword>
<keyword id="KW-0378">Hydrolase</keyword>
<keyword id="KW-0449">Lipoprotein</keyword>
<keyword id="KW-0460">Magnesium</keyword>
<keyword id="KW-0472">Membrane</keyword>
<keyword id="KW-0479">Metal-binding</keyword>
<keyword id="KW-0488">Methylation</keyword>
<keyword id="KW-0547">Nucleotide-binding</keyword>
<keyword id="KW-0581">Phagocytosis</keyword>
<keyword id="KW-0636">Prenylation</keyword>
<keyword id="KW-1185">Reference proteome</keyword>
<evidence type="ECO:0000250" key="1">
    <source>
        <dbReference type="UniProtKB" id="P61585"/>
    </source>
</evidence>
<evidence type="ECO:0000250" key="2">
    <source>
        <dbReference type="UniProtKB" id="P61586"/>
    </source>
</evidence>
<evidence type="ECO:0000256" key="3">
    <source>
        <dbReference type="SAM" id="MobiDB-lite"/>
    </source>
</evidence>
<evidence type="ECO:0000269" key="4">
    <source>
    </source>
</evidence>
<evidence type="ECO:0000269" key="5">
    <source>
    </source>
</evidence>
<evidence type="ECO:0000269" key="6">
    <source>
    </source>
</evidence>
<evidence type="ECO:0000303" key="7">
    <source>
    </source>
</evidence>
<evidence type="ECO:0000305" key="8"/>
<evidence type="ECO:0000305" key="9">
    <source>
    </source>
</evidence>
<evidence type="ECO:0000305" key="10">
    <source>
    </source>
</evidence>
<evidence type="ECO:0000312" key="11">
    <source>
        <dbReference type="EMBL" id="AAA29114.1"/>
    </source>
</evidence>
<evidence type="ECO:0000312" key="12">
    <source>
        <dbReference type="EMBL" id="AAA29115.1"/>
    </source>
</evidence>
<evidence type="ECO:0000312" key="13">
    <source>
        <dbReference type="EMBL" id="EAL49102.2"/>
    </source>
</evidence>
<evidence type="ECO:0000312" key="14">
    <source>
        <dbReference type="PDB" id="3REG"/>
    </source>
</evidence>
<evidence type="ECO:0000312" key="15">
    <source>
        <dbReference type="PDB" id="4DVG"/>
    </source>
</evidence>
<evidence type="ECO:0007744" key="16">
    <source>
        <dbReference type="PDB" id="3REF"/>
    </source>
</evidence>
<evidence type="ECO:0007744" key="17">
    <source>
        <dbReference type="PDB" id="3REG"/>
    </source>
</evidence>
<evidence type="ECO:0007744" key="18">
    <source>
        <dbReference type="PDB" id="4DVG"/>
    </source>
</evidence>
<evidence type="ECO:0007829" key="19">
    <source>
        <dbReference type="PDB" id="3REF"/>
    </source>
</evidence>
<evidence type="ECO:0007829" key="20">
    <source>
        <dbReference type="PDB" id="3REG"/>
    </source>
</evidence>
<accession>P31021</accession>
<accession>A0A175JRQ8</accession>
<accession>C4M4W4</accession>
<sequence length="215" mass="23767">MLAFSDMNTGAGKIENGKKALKIVVVGDGAVGKTCLLLAFSKGEIPTAYVPTVFENFSHVMKYKNEEFILHLWDTAGQEEYDRLRPLSYADSDVVLLCFAVNNRTSFDNISTKWEPEIKHYIDTAKTVLVGLKVDLRKDGSDDVTKQEGDDLCQKLGCVAYIEASSVAKIGLNEVFEKSVDCIFSNKPVPKASVTTQAKSQESTQQKKKSKCLLQ</sequence>
<dbReference type="EC" id="3.6.5.2" evidence="2"/>
<dbReference type="EMBL" id="L03809">
    <property type="protein sequence ID" value="AAA29114.1"/>
    <property type="status" value="ALT_FRAME"/>
    <property type="molecule type" value="Genomic_DNA"/>
</dbReference>
<dbReference type="EMBL" id="L03809">
    <property type="protein sequence ID" value="AAA29115.1"/>
    <property type="status" value="ALT_FRAME"/>
    <property type="molecule type" value="Genomic_DNA"/>
</dbReference>
<dbReference type="EMBL" id="DS571266">
    <property type="protein sequence ID" value="EAL49102.2"/>
    <property type="molecule type" value="Genomic_DNA"/>
</dbReference>
<dbReference type="RefSeq" id="XP_654488.2">
    <property type="nucleotide sequence ID" value="XM_649396.2"/>
</dbReference>
<dbReference type="PDB" id="3REF">
    <property type="method" value="X-ray"/>
    <property type="resolution" value="1.95 A"/>
    <property type="chains" value="A/B=1-191"/>
</dbReference>
<dbReference type="PDB" id="3REG">
    <property type="method" value="X-ray"/>
    <property type="resolution" value="1.80 A"/>
    <property type="chains" value="A/B=1-191"/>
</dbReference>
<dbReference type="PDB" id="4DVG">
    <property type="method" value="X-ray"/>
    <property type="resolution" value="2.60 A"/>
    <property type="chains" value="A=2-186"/>
</dbReference>
<dbReference type="PDBsum" id="3REF"/>
<dbReference type="PDBsum" id="3REG"/>
<dbReference type="PDBsum" id="4DVG"/>
<dbReference type="SMR" id="P31021"/>
<dbReference type="STRING" id="5759.C4M4W4"/>
<dbReference type="EnsemblProtists" id="GAT96429">
    <property type="protein sequence ID" value="GAT96429"/>
    <property type="gene ID" value="CL6EHI_029020"/>
</dbReference>
<dbReference type="EnsemblProtists" id="rna_EHI_029020-1">
    <property type="protein sequence ID" value="rna_EHI_029020-1"/>
    <property type="gene ID" value="EHI_029020"/>
</dbReference>
<dbReference type="GeneID" id="3408802"/>
<dbReference type="KEGG" id="ehi:EHI_029020"/>
<dbReference type="VEuPathDB" id="AmoebaDB:EHI5A_260040"/>
<dbReference type="VEuPathDB" id="AmoebaDB:EHI7A_021100"/>
<dbReference type="VEuPathDB" id="AmoebaDB:EHI8A_014430"/>
<dbReference type="VEuPathDB" id="AmoebaDB:EHI_015440"/>
<dbReference type="VEuPathDB" id="AmoebaDB:KM1_026260"/>
<dbReference type="VEuPathDB" id="AmoebaDB:KM1_121320"/>
<dbReference type="eggNOG" id="KOG0393">
    <property type="taxonomic scope" value="Eukaryota"/>
</dbReference>
<dbReference type="HOGENOM" id="CLU_041217_21_3_1"/>
<dbReference type="OMA" id="KNGFIMF"/>
<dbReference type="OrthoDB" id="8830751at2759"/>
<dbReference type="EvolutionaryTrace" id="P31021"/>
<dbReference type="Proteomes" id="UP000001926">
    <property type="component" value="Partially assembled WGS sequence"/>
</dbReference>
<dbReference type="GO" id="GO:0042995">
    <property type="term" value="C:cell projection"/>
    <property type="evidence" value="ECO:0000318"/>
    <property type="project" value="GO_Central"/>
</dbReference>
<dbReference type="GO" id="GO:0031410">
    <property type="term" value="C:cytoplasmic vesicle"/>
    <property type="evidence" value="ECO:0000318"/>
    <property type="project" value="GO_Central"/>
</dbReference>
<dbReference type="GO" id="GO:0005856">
    <property type="term" value="C:cytoskeleton"/>
    <property type="evidence" value="ECO:0000318"/>
    <property type="project" value="GO_Central"/>
</dbReference>
<dbReference type="GO" id="GO:0001891">
    <property type="term" value="C:phagocytic cup"/>
    <property type="evidence" value="ECO:0000314"/>
    <property type="project" value="UniProtKB"/>
</dbReference>
<dbReference type="GO" id="GO:0045335">
    <property type="term" value="C:phagocytic vesicle"/>
    <property type="evidence" value="ECO:0000314"/>
    <property type="project" value="UniProtKB"/>
</dbReference>
<dbReference type="GO" id="GO:0005886">
    <property type="term" value="C:plasma membrane"/>
    <property type="evidence" value="ECO:0000318"/>
    <property type="project" value="GO_Central"/>
</dbReference>
<dbReference type="GO" id="GO:0005525">
    <property type="term" value="F:GTP binding"/>
    <property type="evidence" value="ECO:0000314"/>
    <property type="project" value="UniProtKB"/>
</dbReference>
<dbReference type="GO" id="GO:0003924">
    <property type="term" value="F:GTPase activity"/>
    <property type="evidence" value="ECO:0000318"/>
    <property type="project" value="GO_Central"/>
</dbReference>
<dbReference type="GO" id="GO:0000287">
    <property type="term" value="F:magnesium ion binding"/>
    <property type="evidence" value="ECO:0000314"/>
    <property type="project" value="UniProtKB"/>
</dbReference>
<dbReference type="GO" id="GO:0019901">
    <property type="term" value="F:protein kinase binding"/>
    <property type="evidence" value="ECO:0000318"/>
    <property type="project" value="GO_Central"/>
</dbReference>
<dbReference type="GO" id="GO:0007015">
    <property type="term" value="P:actin filament organization"/>
    <property type="evidence" value="ECO:0000318"/>
    <property type="project" value="GO_Central"/>
</dbReference>
<dbReference type="GO" id="GO:0044650">
    <property type="term" value="P:adhesion of symbiont to host cell"/>
    <property type="evidence" value="ECO:0000315"/>
    <property type="project" value="UniProtKB"/>
</dbReference>
<dbReference type="GO" id="GO:0030865">
    <property type="term" value="P:cortical cytoskeleton organization"/>
    <property type="evidence" value="ECO:0000318"/>
    <property type="project" value="GO_Central"/>
</dbReference>
<dbReference type="GO" id="GO:0007163">
    <property type="term" value="P:establishment or maintenance of cell polarity"/>
    <property type="evidence" value="ECO:0000318"/>
    <property type="project" value="GO_Central"/>
</dbReference>
<dbReference type="GO" id="GO:0000281">
    <property type="term" value="P:mitotic cytokinesis"/>
    <property type="evidence" value="ECO:0000318"/>
    <property type="project" value="GO_Central"/>
</dbReference>
<dbReference type="GO" id="GO:0006909">
    <property type="term" value="P:phagocytosis"/>
    <property type="evidence" value="ECO:0007669"/>
    <property type="project" value="UniProtKB-KW"/>
</dbReference>
<dbReference type="GO" id="GO:0050766">
    <property type="term" value="P:positive regulation of phagocytosis"/>
    <property type="evidence" value="ECO:0000315"/>
    <property type="project" value="UniProtKB"/>
</dbReference>
<dbReference type="GO" id="GO:1905161">
    <property type="term" value="P:protein localization to phagocytic vesicle"/>
    <property type="evidence" value="ECO:0000315"/>
    <property type="project" value="UniProtKB"/>
</dbReference>
<dbReference type="GO" id="GO:0032956">
    <property type="term" value="P:regulation of actin cytoskeleton organization"/>
    <property type="evidence" value="ECO:0000318"/>
    <property type="project" value="GO_Central"/>
</dbReference>
<dbReference type="GO" id="GO:0008360">
    <property type="term" value="P:regulation of cell shape"/>
    <property type="evidence" value="ECO:0000318"/>
    <property type="project" value="GO_Central"/>
</dbReference>
<dbReference type="GO" id="GO:0007165">
    <property type="term" value="P:signal transduction"/>
    <property type="evidence" value="ECO:0000318"/>
    <property type="project" value="GO_Central"/>
</dbReference>
<dbReference type="GO" id="GO:0007264">
    <property type="term" value="P:small GTPase-mediated signal transduction"/>
    <property type="evidence" value="ECO:0007669"/>
    <property type="project" value="InterPro"/>
</dbReference>
<dbReference type="CDD" id="cd00157">
    <property type="entry name" value="Rho"/>
    <property type="match status" value="1"/>
</dbReference>
<dbReference type="FunFam" id="3.40.50.300:FF:000983">
    <property type="entry name" value="Rho family GTPase"/>
    <property type="match status" value="1"/>
</dbReference>
<dbReference type="Gene3D" id="3.40.50.300">
    <property type="entry name" value="P-loop containing nucleotide triphosphate hydrolases"/>
    <property type="match status" value="1"/>
</dbReference>
<dbReference type="InterPro" id="IPR027417">
    <property type="entry name" value="P-loop_NTPase"/>
</dbReference>
<dbReference type="InterPro" id="IPR005225">
    <property type="entry name" value="Small_GTP-bd"/>
</dbReference>
<dbReference type="InterPro" id="IPR001806">
    <property type="entry name" value="Small_GTPase"/>
</dbReference>
<dbReference type="InterPro" id="IPR003578">
    <property type="entry name" value="Small_GTPase_Rho"/>
</dbReference>
<dbReference type="NCBIfam" id="TIGR00231">
    <property type="entry name" value="small_GTP"/>
    <property type="match status" value="1"/>
</dbReference>
<dbReference type="PANTHER" id="PTHR24072">
    <property type="entry name" value="RHO FAMILY GTPASE"/>
    <property type="match status" value="1"/>
</dbReference>
<dbReference type="Pfam" id="PF00071">
    <property type="entry name" value="Ras"/>
    <property type="match status" value="1"/>
</dbReference>
<dbReference type="PRINTS" id="PR00449">
    <property type="entry name" value="RASTRNSFRMNG"/>
</dbReference>
<dbReference type="SMART" id="SM00175">
    <property type="entry name" value="RAB"/>
    <property type="match status" value="1"/>
</dbReference>
<dbReference type="SMART" id="SM00173">
    <property type="entry name" value="RAS"/>
    <property type="match status" value="1"/>
</dbReference>
<dbReference type="SMART" id="SM00174">
    <property type="entry name" value="RHO"/>
    <property type="match status" value="1"/>
</dbReference>
<dbReference type="SUPFAM" id="SSF52540">
    <property type="entry name" value="P-loop containing nucleoside triphosphate hydrolases"/>
    <property type="match status" value="1"/>
</dbReference>
<dbReference type="PROSITE" id="PS51420">
    <property type="entry name" value="RHO"/>
    <property type="match status" value="1"/>
</dbReference>
<comment type="function">
    <text evidence="4 6">Small GTPase which cycles between active GTP-bound and inactive GDP-bound states (PubMed:21930699). Involved in actin cytoskeleton remodeling (PubMed:21930699, PubMed:29663616). Regulates phagocytosis by modulating actin cytoskeleton dynamics through the recruitment of formin1 and profilin1 to the phagocytosis nucleation site (PubMed:29663616).</text>
</comment>
<comment type="catalytic activity">
    <reaction evidence="2">
        <text>GTP + H2O = GDP + phosphate + H(+)</text>
        <dbReference type="Rhea" id="RHEA:19669"/>
        <dbReference type="ChEBI" id="CHEBI:15377"/>
        <dbReference type="ChEBI" id="CHEBI:15378"/>
        <dbReference type="ChEBI" id="CHEBI:37565"/>
        <dbReference type="ChEBI" id="CHEBI:43474"/>
        <dbReference type="ChEBI" id="CHEBI:58189"/>
        <dbReference type="EC" id="3.6.5.2"/>
    </reaction>
    <physiologicalReaction direction="left-to-right" evidence="2">
        <dbReference type="Rhea" id="RHEA:19670"/>
    </physiologicalReaction>
</comment>
<comment type="cofactor">
    <cofactor evidence="9 10">
        <name>Mg(2+)</name>
        <dbReference type="ChEBI" id="CHEBI:18420"/>
    </cofactor>
</comment>
<comment type="activity regulation">
    <text evidence="2">Regulated by guanine nucleotide exchange factors (GEFs) which promote the exchange of bound GDP for free GTP, GTPase activating proteins (GAPs) which increase the GTP hydrolysis activity and GDP dissociation inhibitors which inhibit the dissociation of the nucleotide from the GTPase.</text>
</comment>
<comment type="subunit">
    <text evidence="4 5 6">Interacts (GTP-bound form) with formin1 (via GBD/FH3 domain); the interaction activates formin1 (PubMed:21930699, PubMed:23050667, PubMed:29663616). Interacts (GTP-bound form) with profilin1 (PubMed:29663616). Interacts (GDP-bound form and when prenylated) with RhoGDI (PubMed:21930699).</text>
</comment>
<comment type="subcellular location">
    <subcellularLocation>
        <location evidence="2">Cell membrane</location>
        <topology evidence="2">Lipid-anchor</topology>
        <orientation evidence="2">Cytoplasmic side</orientation>
    </subcellularLocation>
    <subcellularLocation>
        <location evidence="2">Cytoplasm</location>
        <location evidence="2">Cytoskeleton</location>
    </subcellularLocation>
    <subcellularLocation>
        <location evidence="6">Cell projection</location>
        <location evidence="6">Phagocytic cup</location>
    </subcellularLocation>
    <subcellularLocation>
        <location evidence="6">Cytoplasmic vesicle</location>
        <location evidence="6">Phagosome</location>
    </subcellularLocation>
    <text evidence="6">Co-localizes in its GTP-bound active form with F-actin at the nucleation sites of phagocytic cups where it remains until the closure of phagocytic cups (PubMed:29663616). Localizes to phagosomes after their separation from the cell membrane (PubMed:29663616).</text>
</comment>
<comment type="developmental stage">
    <text evidence="6">Expressed in trophozoites (at protein level).</text>
</comment>
<comment type="domain">
    <text evidence="9 10">The switch 1 and switch 2 motifs undergo large conformational changes during GTP/GDP cycle and play important roles in the interaction with downstream effectors.</text>
</comment>
<comment type="disruption phenotype">
    <text evidence="6">RNAi-mediated knockdown causes a delay in phagocytosis which fails to complete (PubMed:29663616). Slight reduction in F-actin levels (PubMed:29663616). Recruitment of formin1 and profilin1 to the phagocytic cup is impaired (PubMed:29663616). Adhesion to host cells is reduced (PubMed:29663616).</text>
</comment>
<comment type="similarity">
    <text evidence="8">Belongs to the small GTPase superfamily. Rho family.</text>
</comment>
<comment type="sequence caution" evidence="8">
    <conflict type="frameshift">
        <sequence resource="EMBL-CDS" id="AAA29114"/>
    </conflict>
</comment>
<comment type="sequence caution" evidence="8">
    <conflict type="erroneous initiation">
        <sequence resource="EMBL-CDS" id="AAA29115"/>
    </conflict>
    <text>Truncated N-terminus.</text>
</comment>
<comment type="sequence caution" evidence="8">
    <conflict type="frameshift">
        <sequence resource="EMBL-CDS" id="AAA29115"/>
    </conflict>
</comment>
<name>RHO1_ENTH1</name>
<gene>
    <name evidence="7" type="primary">RHO1</name>
    <name evidence="13" type="ORF">EHI_029020</name>
</gene>
<reference evidence="11 12" key="1">
    <citation type="journal article" date="1993" name="Mol. Biochem. Parasitol.">
        <title>Molecular cloning of a rho family gene of Entamoeba histolytica.</title>
        <authorList>
            <person name="Lohia A."/>
            <person name="Samuelson J."/>
        </authorList>
    </citation>
    <scope>NUCLEOTIDE SEQUENCE [GENOMIC DNA]</scope>
    <source>
        <strain evidence="11 12">ATCC 30459 / HM-1:IMSS / ABRM</strain>
    </source>
</reference>
<reference evidence="13" key="2">
    <citation type="journal article" date="2005" name="Nature">
        <title>The genome of the protist parasite Entamoeba histolytica.</title>
        <authorList>
            <person name="Loftus B.J."/>
            <person name="Anderson I."/>
            <person name="Davies R."/>
            <person name="Alsmark U.C."/>
            <person name="Samuelson J."/>
            <person name="Amedeo P."/>
            <person name="Roncaglia P."/>
            <person name="Berriman M."/>
            <person name="Hirt R.P."/>
            <person name="Mann B.J."/>
            <person name="Nozaki T."/>
            <person name="Suh B."/>
            <person name="Pop M."/>
            <person name="Duchene M."/>
            <person name="Ackers J."/>
            <person name="Tannich E."/>
            <person name="Leippe M."/>
            <person name="Hofer M."/>
            <person name="Bruchhaus I."/>
            <person name="Willhoeft U."/>
            <person name="Bhattacharya A."/>
            <person name="Chillingworth T."/>
            <person name="Churcher C.M."/>
            <person name="Hance Z."/>
            <person name="Harris B."/>
            <person name="Harris D."/>
            <person name="Jagels K."/>
            <person name="Moule S."/>
            <person name="Mungall K.L."/>
            <person name="Ormond D."/>
            <person name="Squares R."/>
            <person name="Whitehead S."/>
            <person name="Quail M.A."/>
            <person name="Rabbinowitsch E."/>
            <person name="Norbertczak H."/>
            <person name="Price C."/>
            <person name="Wang Z."/>
            <person name="Guillen N."/>
            <person name="Gilchrist C."/>
            <person name="Stroup S.E."/>
            <person name="Bhattacharya S."/>
            <person name="Lohia A."/>
            <person name="Foster P.G."/>
            <person name="Sicheritz-Ponten T."/>
            <person name="Weber C."/>
            <person name="Singh U."/>
            <person name="Mukherjee C."/>
            <person name="El-Sayed N.M.A."/>
            <person name="Petri W.A."/>
            <person name="Clark C.G."/>
            <person name="Embley T.M."/>
            <person name="Barrell B.G."/>
            <person name="Fraser C.M."/>
            <person name="Hall N."/>
        </authorList>
    </citation>
    <scope>NUCLEOTIDE SEQUENCE [LARGE SCALE GENOMIC DNA]</scope>
    <source>
        <strain evidence="13">ATCC 30459 / HM-1:IMSS / ABRM</strain>
    </source>
</reference>
<reference key="3">
    <citation type="journal article" date="2018" name="Cell. Microbiol.">
        <title>EhRho1 regulates phagocytosis by modulating actin dynamics through EhFormin1 and EhProfilin1 in Entamoeba histolytica.</title>
        <authorList>
            <person name="Bharadwaj R."/>
            <person name="Sharma S."/>
            <person name="Janhawi X."/>
            <person name="Arya R."/>
            <person name="Bhattacharya S."/>
            <person name="Bhattacharya A."/>
        </authorList>
    </citation>
    <scope>FUNCTION</scope>
    <scope>INTERACTION WITH FORMIN1 AND PROFILIN1</scope>
    <scope>SUBCELLULAR LOCATION</scope>
    <scope>DEVELOPMENTAL STAGE</scope>
    <scope>DISRUPTION PHENOTYPE</scope>
</reference>
<reference evidence="16 17" key="4">
    <citation type="journal article" date="2011" name="J. Biol. Chem.">
        <title>Unique structural and nucleotide exchange features of the Rho1 GTPase of Entamoeba histolytica.</title>
        <authorList>
            <person name="Bosch D.E."/>
            <person name="Wittchen E.S."/>
            <person name="Qiu C."/>
            <person name="Burridge K."/>
            <person name="Siderovski D.P."/>
        </authorList>
    </citation>
    <scope>X-RAY CRYSTALLOGRAPHY (1.80 ANGSTROMS) OF 1-191 IN COMPLEX WITH GDP; GTP ANALOG AND MAGNESIUM</scope>
    <scope>FUNCTION</scope>
    <scope>COFACTOR</scope>
    <scope>INTERACTION WITH FORMIN1 AND RHOGDI</scope>
    <scope>SWITCH MOTIF</scope>
    <scope>MUTAGENESIS OF ILE-45; GLN-78; 166-SER-VAL-167 AND CYS-212</scope>
</reference>
<reference evidence="18" key="5">
    <citation type="journal article" date="2012" name="Biochemistry">
        <title>Entamoeba histolytica Rho1 regulates actin polymerization through a divergent, diaphanous-related formin.</title>
        <authorList>
            <person name="Bosch D.E."/>
            <person name="Yang B."/>
            <person name="Siderovski D.P."/>
        </authorList>
    </citation>
    <scope>X-RAY CRYSTALLOGRAPHY (2.60 ANGSTROMS) OF 2-186 IN COMPLEX WITH GTP ANALOG; MAGNESIUM AND FORMIN1</scope>
    <scope>COFACTOR</scope>
    <scope>INTERACTION WITH FORMIN1</scope>
    <scope>SWITCH MOTIF</scope>
    <scope>MUTAGENESIS OF ARG-83 AND HIS-120</scope>
</reference>
<feature type="chain" id="PRO_0000198887" description="Ras-like GTP-binding protein RHO1">
    <location>
        <begin position="1"/>
        <end position="215"/>
    </location>
</feature>
<feature type="propeptide" id="PRO_0000030408" description="Removed in mature form" evidence="1">
    <location>
        <begin position="213"/>
        <end position="215"/>
    </location>
</feature>
<feature type="region of interest" description="Disordered" evidence="3">
    <location>
        <begin position="194"/>
        <end position="215"/>
    </location>
</feature>
<feature type="short sequence motif" description="Switch 1" evidence="9 10">
    <location>
        <begin position="43"/>
        <end position="54"/>
    </location>
</feature>
<feature type="short sequence motif" description="Switch 2" evidence="9 10">
    <location>
        <begin position="74"/>
        <end position="93"/>
    </location>
</feature>
<feature type="compositionally biased region" description="Low complexity" evidence="3">
    <location>
        <begin position="195"/>
        <end position="204"/>
    </location>
</feature>
<feature type="compositionally biased region" description="Basic residues" evidence="3">
    <location>
        <begin position="206"/>
        <end position="215"/>
    </location>
</feature>
<feature type="binding site" evidence="9 10 16 17 18">
    <location>
        <position position="30"/>
    </location>
    <ligand>
        <name>GTP</name>
        <dbReference type="ChEBI" id="CHEBI:37565"/>
    </ligand>
</feature>
<feature type="binding site" evidence="9 17">
    <location>
        <position position="31"/>
    </location>
    <ligand>
        <name>GTP</name>
        <dbReference type="ChEBI" id="CHEBI:37565"/>
    </ligand>
</feature>
<feature type="binding site" evidence="9 10 16 17 18">
    <location>
        <position position="32"/>
    </location>
    <ligand>
        <name>GTP</name>
        <dbReference type="ChEBI" id="CHEBI:37565"/>
    </ligand>
</feature>
<feature type="binding site" evidence="9 10 16 17 18">
    <location>
        <position position="33"/>
    </location>
    <ligand>
        <name>GTP</name>
        <dbReference type="ChEBI" id="CHEBI:37565"/>
    </ligand>
</feature>
<feature type="binding site" evidence="9 10 16 17 18">
    <location>
        <position position="34"/>
    </location>
    <ligand>
        <name>GTP</name>
        <dbReference type="ChEBI" id="CHEBI:37565"/>
    </ligand>
</feature>
<feature type="binding site" evidence="4 5 14 15 16">
    <location>
        <position position="34"/>
    </location>
    <ligand>
        <name>Mg(2+)</name>
        <dbReference type="ChEBI" id="CHEBI:18420"/>
    </ligand>
</feature>
<feature type="binding site" evidence="9 10 16 17 18">
    <location>
        <position position="35"/>
    </location>
    <ligand>
        <name>GTP</name>
        <dbReference type="ChEBI" id="CHEBI:37565"/>
    </ligand>
</feature>
<feature type="binding site" evidence="4 5 14 15 16">
    <location>
        <position position="52"/>
    </location>
    <ligand>
        <name>Mg(2+)</name>
        <dbReference type="ChEBI" id="CHEBI:18420"/>
    </ligand>
</feature>
<feature type="binding site" evidence="9 10 16 17 18">
    <location>
        <position position="135"/>
    </location>
    <ligand>
        <name>GTP</name>
        <dbReference type="ChEBI" id="CHEBI:37565"/>
    </ligand>
</feature>
<feature type="binding site" evidence="9 10 16 17 18">
    <location>
        <position position="166"/>
    </location>
    <ligand>
        <name>GTP</name>
        <dbReference type="ChEBI" id="CHEBI:37565"/>
    </ligand>
</feature>
<feature type="modified residue" description="Cysteine methyl ester" evidence="1">
    <location>
        <position position="212"/>
    </location>
</feature>
<feature type="lipid moiety-binding region" description="S-geranylgeranyl cysteine" evidence="1">
    <location>
        <position position="212"/>
    </location>
</feature>
<feature type="mutagenesis site" description="Decreases the rate of nucleotide exchange." evidence="4">
    <original>I</original>
    <variation>F</variation>
    <location>
        <position position="45"/>
    </location>
</feature>
<feature type="mutagenesis site" description="Increases the rate of nucleotide exchange." evidence="4">
    <original>I</original>
    <variation>L</variation>
    <location>
        <position position="45"/>
    </location>
</feature>
<feature type="mutagenesis site" description="Probable loss of GTP hydrolysis activity. Loss of interaction with RhoGDI." evidence="4">
    <original>Q</original>
    <variation>L</variation>
    <location>
        <position position="78"/>
    </location>
</feature>
<feature type="mutagenesis site" description="Loss of interaction with formin1." evidence="5">
    <original>R</original>
    <variation>Q</variation>
    <location>
        <position position="83"/>
    </location>
</feature>
<feature type="mutagenesis site" description="Loss of interaction with formin1." evidence="5">
    <original>H</original>
    <variation>Q</variation>
    <location>
        <position position="120"/>
    </location>
</feature>
<feature type="mutagenesis site" description="Increases the rate of nucleotide exchange." evidence="4">
    <original>SV</original>
    <variation>AK</variation>
    <location>
        <begin position="166"/>
        <end position="167"/>
    </location>
</feature>
<feature type="mutagenesis site" description="Probable loss of prenylation. Loss of interaction with RhoGDI." evidence="4">
    <original>C</original>
    <variation>S</variation>
    <location>
        <position position="212"/>
    </location>
</feature>
<feature type="sequence conflict" description="In Ref. 1; AAA29114/AAA29115." evidence="8" ref="1">
    <original>H</original>
    <variation>D</variation>
    <location>
        <position position="71"/>
    </location>
</feature>
<feature type="sequence conflict" description="In Ref. 1; AAA29114/AAA29115." evidence="8" ref="1">
    <original>G</original>
    <variation>V</variation>
    <location>
        <position position="140"/>
    </location>
</feature>
<feature type="strand" evidence="19">
    <location>
        <begin position="13"/>
        <end position="15"/>
    </location>
</feature>
<feature type="strand" evidence="20">
    <location>
        <begin position="19"/>
        <end position="26"/>
    </location>
</feature>
<feature type="helix" evidence="20">
    <location>
        <begin position="33"/>
        <end position="42"/>
    </location>
</feature>
<feature type="strand" evidence="20">
    <location>
        <begin position="53"/>
        <end position="63"/>
    </location>
</feature>
<feature type="strand" evidence="20">
    <location>
        <begin position="66"/>
        <end position="75"/>
    </location>
</feature>
<feature type="helix" evidence="20">
    <location>
        <begin position="79"/>
        <end position="81"/>
    </location>
</feature>
<feature type="turn" evidence="20">
    <location>
        <begin position="82"/>
        <end position="84"/>
    </location>
</feature>
<feature type="helix" evidence="20">
    <location>
        <begin position="85"/>
        <end position="88"/>
    </location>
</feature>
<feature type="strand" evidence="20">
    <location>
        <begin position="93"/>
        <end position="100"/>
    </location>
</feature>
<feature type="helix" evidence="20">
    <location>
        <begin position="104"/>
        <end position="112"/>
    </location>
</feature>
<feature type="helix" evidence="20">
    <location>
        <begin position="114"/>
        <end position="121"/>
    </location>
</feature>
<feature type="strand" evidence="20">
    <location>
        <begin position="125"/>
        <end position="132"/>
    </location>
</feature>
<feature type="helix" evidence="20">
    <location>
        <begin position="134"/>
        <end position="136"/>
    </location>
</feature>
<feature type="turn" evidence="20">
    <location>
        <begin position="139"/>
        <end position="142"/>
    </location>
</feature>
<feature type="helix" evidence="20">
    <location>
        <begin position="146"/>
        <end position="156"/>
    </location>
</feature>
<feature type="strand" evidence="20">
    <location>
        <begin position="161"/>
        <end position="163"/>
    </location>
</feature>
<feature type="turn" evidence="20">
    <location>
        <begin position="166"/>
        <end position="169"/>
    </location>
</feature>
<feature type="helix" evidence="20">
    <location>
        <begin position="172"/>
        <end position="184"/>
    </location>
</feature>
<proteinExistence type="evidence at protein level"/>